<accession>Q64912</accession>
<feature type="chain" id="PRO_0000040646" description="Non-structural protein NS3">
    <location>
        <begin position="1"/>
        <end position="217"/>
    </location>
</feature>
<feature type="chain" id="PRO_0000040647" description="Non-structural protein NS3A">
    <location>
        <begin position="12"/>
        <end position="217"/>
    </location>
</feature>
<evidence type="ECO:0000305" key="1"/>
<organism>
    <name type="scientific">African horse sickness virus 6</name>
    <name type="common">AHSV-6</name>
    <dbReference type="NCBI Taxonomy" id="86060"/>
    <lineage>
        <taxon>Viruses</taxon>
        <taxon>Riboviria</taxon>
        <taxon>Orthornavirae</taxon>
        <taxon>Duplornaviricota</taxon>
        <taxon>Resentoviricetes</taxon>
        <taxon>Reovirales</taxon>
        <taxon>Sedoreoviridae</taxon>
        <taxon>Orbivirus</taxon>
        <taxon>African horse sickness virus</taxon>
    </lineage>
</organism>
<name>VNS3_AHSV6</name>
<organismHost>
    <name type="scientific">Camelus dromedarius</name>
    <name type="common">Dromedary</name>
    <name type="synonym">Arabian camel</name>
    <dbReference type="NCBI Taxonomy" id="9838"/>
</organismHost>
<organismHost>
    <name type="scientific">Canis lupus familiaris</name>
    <name type="common">Dog</name>
    <name type="synonym">Canis familiaris</name>
    <dbReference type="NCBI Taxonomy" id="9615"/>
</organismHost>
<organismHost>
    <name type="scientific">Equus asinus</name>
    <name type="common">Donkey</name>
    <name type="synonym">Equus africanus asinus</name>
    <dbReference type="NCBI Taxonomy" id="9793"/>
</organismHost>
<organismHost>
    <name type="scientific">Equus caballus</name>
    <name type="common">Horse</name>
    <dbReference type="NCBI Taxonomy" id="9796"/>
</organismHost>
<organismHost>
    <name type="scientific">Equus hemionus</name>
    <name type="common">Onager</name>
    <name type="synonym">Asian wild ass</name>
    <dbReference type="NCBI Taxonomy" id="9794"/>
</organismHost>
<organismHost>
    <name type="scientific">Equus quagga burchellii</name>
    <name type="common">Burchell's zebra</name>
    <name type="synonym">Equus burchelli</name>
    <dbReference type="NCBI Taxonomy" id="89252"/>
</organismHost>
<organismHost>
    <name type="scientific">Loxodonta africana</name>
    <name type="common">African elephant</name>
    <dbReference type="NCBI Taxonomy" id="9785"/>
</organismHost>
<protein>
    <recommendedName>
        <fullName>Non-structural protein NS3</fullName>
    </recommendedName>
    <component>
        <recommendedName>
            <fullName>Non-structural protein NS3A</fullName>
        </recommendedName>
    </component>
</protein>
<sequence length="217" mass="23771">MNLAAIAKNYSMHNGESEAIVPYVPPPYNFASAPTFSQRTSQMESVSLGILNQAMSSTTGASGALKDEKAAFGAMAEALRDPEPIRQIKKQVGIRTLKNLKMELATMRRKKSALKIMIFISGCVTLATSMVGGLSIVDDEILRDYKNNDWLMKTIHGLNLLCTTVLLAAGKISDKIQEEISRTKRDIAKRESYVSAASMSWNGDTEMLLQGIKYGES</sequence>
<proteinExistence type="inferred from homology"/>
<dbReference type="EMBL" id="U26171">
    <property type="protein sequence ID" value="AAA84749.1"/>
    <property type="molecule type" value="Genomic_RNA"/>
</dbReference>
<dbReference type="SMR" id="Q64912"/>
<dbReference type="InterPro" id="IPR002565">
    <property type="entry name" value="Orbi_NS3"/>
</dbReference>
<dbReference type="Pfam" id="PF01616">
    <property type="entry name" value="Orbi_NS3"/>
    <property type="match status" value="1"/>
</dbReference>
<comment type="function">
    <text>May play a role in the release of virions from infected cells.</text>
</comment>
<comment type="similarity">
    <text evidence="1">Belongs to the orbivirus NS3 family.</text>
</comment>
<gene>
    <name type="primary">Segment-10</name>
</gene>
<reference key="1">
    <citation type="submission" date="1995-05" db="EMBL/GenBank/DDBJ databases">
        <authorList>
            <person name="Stoltz M.A."/>
            <person name="van Staden V."/>
            <person name="Napier G.B."/>
            <person name="Huismans H."/>
        </authorList>
    </citation>
    <scope>NUCLEOTIDE SEQUENCE [GENOMIC RNA]</scope>
</reference>